<organism>
    <name type="scientific">Homo sapiens</name>
    <name type="common">Human</name>
    <dbReference type="NCBI Taxonomy" id="9606"/>
    <lineage>
        <taxon>Eukaryota</taxon>
        <taxon>Metazoa</taxon>
        <taxon>Chordata</taxon>
        <taxon>Craniata</taxon>
        <taxon>Vertebrata</taxon>
        <taxon>Euteleostomi</taxon>
        <taxon>Mammalia</taxon>
        <taxon>Eutheria</taxon>
        <taxon>Euarchontoglires</taxon>
        <taxon>Primates</taxon>
        <taxon>Haplorrhini</taxon>
        <taxon>Catarrhini</taxon>
        <taxon>Hominidae</taxon>
        <taxon>Homo</taxon>
    </lineage>
</organism>
<name>UBAD2_HUMAN</name>
<comment type="similarity">
    <text evidence="2">Belongs to the UBALD family.</text>
</comment>
<keyword id="KW-0002">3D-structure</keyword>
<keyword id="KW-0007">Acetylation</keyword>
<keyword id="KW-1267">Proteomics identification</keyword>
<keyword id="KW-1185">Reference proteome</keyword>
<sequence>MSVNMDELRHQVMINQFVLAAGCAADQAKQLLQAAHWQFETALSTFFQETNIPNSHHHHQMMCTPSNTPATPPNFPDALAMFSKLRASEGLQSSNSPMTAAACSPPANFSPFWASSPPSHQAPWIPPSSPTTFHHLHRPQPTWPPGAQQGGAQQKAMAAMDGQR</sequence>
<gene>
    <name type="primary">UBALD2</name>
    <name type="synonym">FAM100B</name>
</gene>
<proteinExistence type="evidence at protein level"/>
<accession>Q8IYN6</accession>
<reference key="1">
    <citation type="journal article" date="2004" name="Genome Res.">
        <title>The status, quality, and expansion of the NIH full-length cDNA project: the Mammalian Gene Collection (MGC).</title>
        <authorList>
            <consortium name="The MGC Project Team"/>
        </authorList>
    </citation>
    <scope>NUCLEOTIDE SEQUENCE [LARGE SCALE MRNA]</scope>
    <source>
        <tissue>Brain</tissue>
        <tissue>Placenta</tissue>
    </source>
</reference>
<reference key="2">
    <citation type="journal article" date="2012" name="Proc. Natl. Acad. Sci. U.S.A.">
        <title>N-terminal acetylome analyses and functional insights of the N-terminal acetyltransferase NatB.</title>
        <authorList>
            <person name="Van Damme P."/>
            <person name="Lasa M."/>
            <person name="Polevoda B."/>
            <person name="Gazquez C."/>
            <person name="Elosegui-Artola A."/>
            <person name="Kim D.S."/>
            <person name="De Juan-Pardo E."/>
            <person name="Demeyer K."/>
            <person name="Hole K."/>
            <person name="Larrea E."/>
            <person name="Timmerman E."/>
            <person name="Prieto J."/>
            <person name="Arnesen T."/>
            <person name="Sherman F."/>
            <person name="Gevaert K."/>
            <person name="Aldabe R."/>
        </authorList>
    </citation>
    <scope>ACETYLATION [LARGE SCALE ANALYSIS] AT SER-2</scope>
    <scope>CLEAVAGE OF INITIATOR METHIONINE [LARGE SCALE ANALYSIS]</scope>
    <scope>IDENTIFICATION BY MASS SPECTROMETRY [LARGE SCALE ANALYSIS]</scope>
</reference>
<reference key="3">
    <citation type="submission" date="2007-03" db="PDB data bank">
        <title>Solution structure of the UBA domain in human protein FAM100B.</title>
        <authorList>
            <consortium name="RIKEN structural genomics initiative (RSGI)"/>
        </authorList>
    </citation>
    <scope>STRUCTURE BY NMR OF 1-59</scope>
</reference>
<feature type="initiator methionine" description="Removed" evidence="3">
    <location>
        <position position="1"/>
    </location>
</feature>
<feature type="chain" id="PRO_0000239028" description="UBA-like domain-containing protein 2">
    <location>
        <begin position="2"/>
        <end position="164"/>
    </location>
</feature>
<feature type="region of interest" description="Disordered" evidence="1">
    <location>
        <begin position="128"/>
        <end position="164"/>
    </location>
</feature>
<feature type="compositionally biased region" description="Low complexity" evidence="1">
    <location>
        <begin position="146"/>
        <end position="164"/>
    </location>
</feature>
<feature type="modified residue" description="N-acetylserine" evidence="3">
    <location>
        <position position="2"/>
    </location>
</feature>
<feature type="helix" evidence="4">
    <location>
        <begin position="6"/>
        <end position="21"/>
    </location>
</feature>
<feature type="helix" evidence="4">
    <location>
        <begin position="25"/>
        <end position="33"/>
    </location>
</feature>
<feature type="turn" evidence="4">
    <location>
        <begin position="34"/>
        <end position="37"/>
    </location>
</feature>
<feature type="helix" evidence="4">
    <location>
        <begin position="39"/>
        <end position="47"/>
    </location>
</feature>
<dbReference type="EMBL" id="BC035511">
    <property type="protein sequence ID" value="AAH35511.1"/>
    <property type="molecule type" value="mRNA"/>
</dbReference>
<dbReference type="EMBL" id="BC060859">
    <property type="protein sequence ID" value="AAH60859.1"/>
    <property type="molecule type" value="mRNA"/>
</dbReference>
<dbReference type="CCDS" id="CCDS11742.1"/>
<dbReference type="RefSeq" id="NP_872371.1">
    <property type="nucleotide sequence ID" value="NM_182565.4"/>
</dbReference>
<dbReference type="PDB" id="2DZL">
    <property type="method" value="NMR"/>
    <property type="chains" value="A=1-59"/>
</dbReference>
<dbReference type="PDBsum" id="2DZL"/>
<dbReference type="BMRB" id="Q8IYN6"/>
<dbReference type="SMR" id="Q8IYN6"/>
<dbReference type="BioGRID" id="129722">
    <property type="interactions" value="90"/>
</dbReference>
<dbReference type="FunCoup" id="Q8IYN6">
    <property type="interactions" value="24"/>
</dbReference>
<dbReference type="IntAct" id="Q8IYN6">
    <property type="interactions" value="6"/>
</dbReference>
<dbReference type="STRING" id="9606.ENSP00000331298"/>
<dbReference type="GlyGen" id="Q8IYN6">
    <property type="glycosylation" value="1 site"/>
</dbReference>
<dbReference type="iPTMnet" id="Q8IYN6"/>
<dbReference type="PhosphoSitePlus" id="Q8IYN6"/>
<dbReference type="BioMuta" id="UBALD2"/>
<dbReference type="DMDM" id="74728359"/>
<dbReference type="MassIVE" id="Q8IYN6"/>
<dbReference type="PaxDb" id="9606-ENSP00000331298"/>
<dbReference type="PeptideAtlas" id="Q8IYN6"/>
<dbReference type="ProteomicsDB" id="71209"/>
<dbReference type="Antibodypedia" id="19681">
    <property type="antibodies" value="10 antibodies from 7 providers"/>
</dbReference>
<dbReference type="DNASU" id="283991"/>
<dbReference type="Ensembl" id="ENST00000327490.8">
    <property type="protein sequence ID" value="ENSP00000331298.6"/>
    <property type="gene ID" value="ENSG00000185262.9"/>
</dbReference>
<dbReference type="GeneID" id="283991"/>
<dbReference type="KEGG" id="hsa:283991"/>
<dbReference type="MANE-Select" id="ENST00000327490.8">
    <property type="protein sequence ID" value="ENSP00000331298.6"/>
    <property type="RefSeq nucleotide sequence ID" value="NM_182565.4"/>
    <property type="RefSeq protein sequence ID" value="NP_872371.1"/>
</dbReference>
<dbReference type="UCSC" id="uc010wsy.2">
    <property type="organism name" value="human"/>
</dbReference>
<dbReference type="AGR" id="HGNC:28438"/>
<dbReference type="CTD" id="283991"/>
<dbReference type="GeneCards" id="UBALD2"/>
<dbReference type="HGNC" id="HGNC:28438">
    <property type="gene designation" value="UBALD2"/>
</dbReference>
<dbReference type="HPA" id="ENSG00000185262">
    <property type="expression patterns" value="Tissue enhanced (bone)"/>
</dbReference>
<dbReference type="neXtProt" id="NX_Q8IYN6"/>
<dbReference type="OpenTargets" id="ENSG00000185262"/>
<dbReference type="PharmGKB" id="PA142671783"/>
<dbReference type="VEuPathDB" id="HostDB:ENSG00000185262"/>
<dbReference type="eggNOG" id="ENOG502S43S">
    <property type="taxonomic scope" value="Eukaryota"/>
</dbReference>
<dbReference type="GeneTree" id="ENSGT00390000008825"/>
<dbReference type="HOGENOM" id="CLU_108623_0_1_1"/>
<dbReference type="InParanoid" id="Q8IYN6"/>
<dbReference type="OMA" id="HRLHCPQ"/>
<dbReference type="OrthoDB" id="6093553at2759"/>
<dbReference type="PAN-GO" id="Q8IYN6">
    <property type="GO annotations" value="0 GO annotations based on evolutionary models"/>
</dbReference>
<dbReference type="PhylomeDB" id="Q8IYN6"/>
<dbReference type="TreeFam" id="TF329433"/>
<dbReference type="PathwayCommons" id="Q8IYN6"/>
<dbReference type="SignaLink" id="Q8IYN6"/>
<dbReference type="BioGRID-ORCS" id="283991">
    <property type="hits" value="25 hits in 1145 CRISPR screens"/>
</dbReference>
<dbReference type="ChiTaRS" id="UBALD2">
    <property type="organism name" value="human"/>
</dbReference>
<dbReference type="EvolutionaryTrace" id="Q8IYN6"/>
<dbReference type="GenomeRNAi" id="283991"/>
<dbReference type="Pharos" id="Q8IYN6">
    <property type="development level" value="Tdark"/>
</dbReference>
<dbReference type="PRO" id="PR:Q8IYN6"/>
<dbReference type="Proteomes" id="UP000005640">
    <property type="component" value="Chromosome 17"/>
</dbReference>
<dbReference type="RNAct" id="Q8IYN6">
    <property type="molecule type" value="protein"/>
</dbReference>
<dbReference type="Bgee" id="ENSG00000185262">
    <property type="expression patterns" value="Expressed in bone marrow cell and 180 other cell types or tissues"/>
</dbReference>
<dbReference type="ExpressionAtlas" id="Q8IYN6">
    <property type="expression patterns" value="baseline and differential"/>
</dbReference>
<dbReference type="CDD" id="cd14343">
    <property type="entry name" value="UBA_F100B_like"/>
    <property type="match status" value="1"/>
</dbReference>
<dbReference type="Gene3D" id="1.10.8.10">
    <property type="entry name" value="DNA helicase RuvA subunit, C-terminal domain"/>
    <property type="match status" value="1"/>
</dbReference>
<dbReference type="InterPro" id="IPR009060">
    <property type="entry name" value="UBA-like_sf"/>
</dbReference>
<dbReference type="InterPro" id="IPR054109">
    <property type="entry name" value="UBA_8"/>
</dbReference>
<dbReference type="InterPro" id="IPR039310">
    <property type="entry name" value="UBALD1/2"/>
</dbReference>
<dbReference type="PANTHER" id="PTHR31993">
    <property type="entry name" value="UBA-LIKE DOMAIN-CONTAINING PROTEIN 2"/>
    <property type="match status" value="1"/>
</dbReference>
<dbReference type="PANTHER" id="PTHR31993:SF6">
    <property type="entry name" value="UBA-LIKE DOMAIN-CONTAINING PROTEIN 2"/>
    <property type="match status" value="1"/>
</dbReference>
<dbReference type="Pfam" id="PF22566">
    <property type="entry name" value="UBA_8"/>
    <property type="match status" value="1"/>
</dbReference>
<dbReference type="SUPFAM" id="SSF46934">
    <property type="entry name" value="UBA-like"/>
    <property type="match status" value="1"/>
</dbReference>
<protein>
    <recommendedName>
        <fullName>UBA-like domain-containing protein 2</fullName>
    </recommendedName>
</protein>
<evidence type="ECO:0000256" key="1">
    <source>
        <dbReference type="SAM" id="MobiDB-lite"/>
    </source>
</evidence>
<evidence type="ECO:0000305" key="2"/>
<evidence type="ECO:0007744" key="3">
    <source>
    </source>
</evidence>
<evidence type="ECO:0007829" key="4">
    <source>
        <dbReference type="PDB" id="2DZL"/>
    </source>
</evidence>